<accession>Q5HIA1</accession>
<gene>
    <name type="primary">vraA</name>
    <name type="ordered locus">SACOL0621</name>
</gene>
<proteinExistence type="inferred from homology"/>
<organism>
    <name type="scientific">Staphylococcus aureus (strain COL)</name>
    <dbReference type="NCBI Taxonomy" id="93062"/>
    <lineage>
        <taxon>Bacteria</taxon>
        <taxon>Bacillati</taxon>
        <taxon>Bacillota</taxon>
        <taxon>Bacilli</taxon>
        <taxon>Bacillales</taxon>
        <taxon>Staphylococcaceae</taxon>
        <taxon>Staphylococcus</taxon>
    </lineage>
</organism>
<reference key="1">
    <citation type="journal article" date="2005" name="J. Bacteriol.">
        <title>Insights on evolution of virulence and resistance from the complete genome analysis of an early methicillin-resistant Staphylococcus aureus strain and a biofilm-producing methicillin-resistant Staphylococcus epidermidis strain.</title>
        <authorList>
            <person name="Gill S.R."/>
            <person name="Fouts D.E."/>
            <person name="Archer G.L."/>
            <person name="Mongodin E.F."/>
            <person name="DeBoy R.T."/>
            <person name="Ravel J."/>
            <person name="Paulsen I.T."/>
            <person name="Kolonay J.F."/>
            <person name="Brinkac L.M."/>
            <person name="Beanan M.J."/>
            <person name="Dodson R.J."/>
            <person name="Daugherty S.C."/>
            <person name="Madupu R."/>
            <person name="Angiuoli S.V."/>
            <person name="Durkin A.S."/>
            <person name="Haft D.H."/>
            <person name="Vamathevan J.J."/>
            <person name="Khouri H."/>
            <person name="Utterback T.R."/>
            <person name="Lee C."/>
            <person name="Dimitrov G."/>
            <person name="Jiang L."/>
            <person name="Qin H."/>
            <person name="Weidman J."/>
            <person name="Tran K."/>
            <person name="Kang K.H."/>
            <person name="Hance I.R."/>
            <person name="Nelson K.E."/>
            <person name="Fraser C.M."/>
        </authorList>
    </citation>
    <scope>NUCLEOTIDE SEQUENCE [LARGE SCALE GENOMIC DNA]</scope>
    <source>
        <strain>COL</strain>
    </source>
</reference>
<dbReference type="EC" id="6.2.1.-"/>
<dbReference type="EMBL" id="CP000046">
    <property type="protein sequence ID" value="AAW37730.1"/>
    <property type="molecule type" value="Genomic_DNA"/>
</dbReference>
<dbReference type="RefSeq" id="WP_001100835.1">
    <property type="nucleotide sequence ID" value="NZ_JBGOFO010000005.1"/>
</dbReference>
<dbReference type="SMR" id="Q5HIA1"/>
<dbReference type="KEGG" id="sac:SACOL0621"/>
<dbReference type="HOGENOM" id="CLU_000022_59_0_9"/>
<dbReference type="Proteomes" id="UP000000530">
    <property type="component" value="Chromosome"/>
</dbReference>
<dbReference type="GO" id="GO:0031956">
    <property type="term" value="F:medium-chain fatty acid-CoA ligase activity"/>
    <property type="evidence" value="ECO:0007669"/>
    <property type="project" value="TreeGrafter"/>
</dbReference>
<dbReference type="GO" id="GO:0006631">
    <property type="term" value="P:fatty acid metabolic process"/>
    <property type="evidence" value="ECO:0007669"/>
    <property type="project" value="UniProtKB-KW"/>
</dbReference>
<dbReference type="CDD" id="cd17633">
    <property type="entry name" value="AFD_YhfT-like"/>
    <property type="match status" value="1"/>
</dbReference>
<dbReference type="Gene3D" id="3.30.300.30">
    <property type="match status" value="1"/>
</dbReference>
<dbReference type="Gene3D" id="3.40.50.12780">
    <property type="entry name" value="N-terminal domain of ligase-like"/>
    <property type="match status" value="1"/>
</dbReference>
<dbReference type="InterPro" id="IPR025110">
    <property type="entry name" value="AMP-bd_C"/>
</dbReference>
<dbReference type="InterPro" id="IPR045851">
    <property type="entry name" value="AMP-bd_C_sf"/>
</dbReference>
<dbReference type="InterPro" id="IPR020845">
    <property type="entry name" value="AMP-binding_CS"/>
</dbReference>
<dbReference type="InterPro" id="IPR000873">
    <property type="entry name" value="AMP-dep_synth/lig_dom"/>
</dbReference>
<dbReference type="InterPro" id="IPR042099">
    <property type="entry name" value="ANL_N_sf"/>
</dbReference>
<dbReference type="PANTHER" id="PTHR43201">
    <property type="entry name" value="ACYL-COA SYNTHETASE"/>
    <property type="match status" value="1"/>
</dbReference>
<dbReference type="PANTHER" id="PTHR43201:SF5">
    <property type="entry name" value="MEDIUM-CHAIN ACYL-COA LIGASE ACSF2, MITOCHONDRIAL"/>
    <property type="match status" value="1"/>
</dbReference>
<dbReference type="Pfam" id="PF00501">
    <property type="entry name" value="AMP-binding"/>
    <property type="match status" value="1"/>
</dbReference>
<dbReference type="Pfam" id="PF13193">
    <property type="entry name" value="AMP-binding_C"/>
    <property type="match status" value="1"/>
</dbReference>
<dbReference type="SUPFAM" id="SSF56801">
    <property type="entry name" value="Acetyl-CoA synthetase-like"/>
    <property type="match status" value="1"/>
</dbReference>
<dbReference type="PROSITE" id="PS00455">
    <property type="entry name" value="AMP_BINDING"/>
    <property type="match status" value="1"/>
</dbReference>
<feature type="chain" id="PRO_0000193191" description="Putative long chain fatty acid-CoA ligase VraA">
    <location>
        <begin position="1"/>
        <end position="458"/>
    </location>
</feature>
<protein>
    <recommendedName>
        <fullName>Putative long chain fatty acid-CoA ligase VraA</fullName>
        <ecNumber>6.2.1.-</ecNumber>
    </recommendedName>
    <alternativeName>
        <fullName>Acyl-CoA synthetase</fullName>
    </alternativeName>
</protein>
<sequence length="458" mass="52024">MNVILEQLKTHTQNKPNDIALHIDDETITYSQLNARITSAVESLQKYSLNPVVAINMKSPVQSIICYLALHRLHKVPMMMEGKWQSTIHRQLIEKYGIKDVIGDTGLMQNIDSPMFIDSTQLQHYPNLLHIGFTSGTTGLPKAYYRDEDSWLASFEVNEMLMLKNENAIAAPGPLSHSLTLYALLFALSSGRTFIGQTTFHPEKLLNQCHKISSYKVAMFLVPTMIKSLLLVYNNEHTIQSFFSSGDKLHSSIFKKIKNQANDINLIEFFGTSETSFISYNLNQQAPVESVGVLFPNVELKTTNHDHNGIGTICIKSNMMFSGYVSEQCINNDEWFVTNDNGYVKEQYLYLTGRQQDMLIIGGQNIYPAHVERLLTQSSSIDEAIIIGIPNERFGQIGVLLYSGDVTLTHKNVKQFLKKKVKRYEIPSMIHHVEKMYYTASGKIAREKMMSMYLRGEL</sequence>
<comment type="similarity">
    <text evidence="1">Belongs to the ATP-dependent AMP-binding enzyme family.</text>
</comment>
<name>VRAA_STAAC</name>
<keyword id="KW-0276">Fatty acid metabolism</keyword>
<keyword id="KW-0436">Ligase</keyword>
<keyword id="KW-0443">Lipid metabolism</keyword>
<evidence type="ECO:0000305" key="1"/>